<feature type="chain" id="PRO_1000052166" description="Large ribosomal subunit protein uL3">
    <location>
        <begin position="1"/>
        <end position="209"/>
    </location>
</feature>
<feature type="modified residue" description="N5-methylglutamine" evidence="1">
    <location>
        <position position="150"/>
    </location>
</feature>
<sequence>MIGLIGRKVGMTRVFTEDGVSIPVTVVEVEANRVSQVKTLETDGYAAIQVTAGSKKANRVNKAEAGHFAKAGVEAGRGLWEFRLENGEEFAVGAELTVELFNETKKVDVTGTSKGKGFQGAVKRWNFRTQDMTHGNSLSHRAPGSIGQCQTPGRVFKGKKMAGHMGAERVTTQNLEIVRVDAERNLLLIKGAVPGSTGGNVIVKPAVKA</sequence>
<keyword id="KW-0488">Methylation</keyword>
<keyword id="KW-0687">Ribonucleoprotein</keyword>
<keyword id="KW-0689">Ribosomal protein</keyword>
<keyword id="KW-0694">RNA-binding</keyword>
<keyword id="KW-0699">rRNA-binding</keyword>
<organism>
    <name type="scientific">Vibrio campbellii (strain ATCC BAA-1116)</name>
    <dbReference type="NCBI Taxonomy" id="2902295"/>
    <lineage>
        <taxon>Bacteria</taxon>
        <taxon>Pseudomonadati</taxon>
        <taxon>Pseudomonadota</taxon>
        <taxon>Gammaproteobacteria</taxon>
        <taxon>Vibrionales</taxon>
        <taxon>Vibrionaceae</taxon>
        <taxon>Vibrio</taxon>
    </lineage>
</organism>
<proteinExistence type="inferred from homology"/>
<name>RL3_VIBC1</name>
<dbReference type="EMBL" id="CP000789">
    <property type="protein sequence ID" value="ABU69731.1"/>
    <property type="molecule type" value="Genomic_DNA"/>
</dbReference>
<dbReference type="RefSeq" id="WP_005435072.1">
    <property type="nucleotide sequence ID" value="NC_022269.1"/>
</dbReference>
<dbReference type="SMR" id="A7MWI3"/>
<dbReference type="GeneID" id="83583123"/>
<dbReference type="KEGG" id="vha:VIBHAR_00730"/>
<dbReference type="PATRIC" id="fig|338187.25.peg.1884"/>
<dbReference type="Proteomes" id="UP000008152">
    <property type="component" value="Chromosome I"/>
</dbReference>
<dbReference type="GO" id="GO:0022625">
    <property type="term" value="C:cytosolic large ribosomal subunit"/>
    <property type="evidence" value="ECO:0007669"/>
    <property type="project" value="TreeGrafter"/>
</dbReference>
<dbReference type="GO" id="GO:0019843">
    <property type="term" value="F:rRNA binding"/>
    <property type="evidence" value="ECO:0007669"/>
    <property type="project" value="UniProtKB-UniRule"/>
</dbReference>
<dbReference type="GO" id="GO:0003735">
    <property type="term" value="F:structural constituent of ribosome"/>
    <property type="evidence" value="ECO:0007669"/>
    <property type="project" value="InterPro"/>
</dbReference>
<dbReference type="GO" id="GO:0006412">
    <property type="term" value="P:translation"/>
    <property type="evidence" value="ECO:0007669"/>
    <property type="project" value="UniProtKB-UniRule"/>
</dbReference>
<dbReference type="FunFam" id="2.40.30.10:FF:000004">
    <property type="entry name" value="50S ribosomal protein L3"/>
    <property type="match status" value="1"/>
</dbReference>
<dbReference type="FunFam" id="3.30.160.810:FF:000001">
    <property type="entry name" value="50S ribosomal protein L3"/>
    <property type="match status" value="1"/>
</dbReference>
<dbReference type="Gene3D" id="3.30.160.810">
    <property type="match status" value="1"/>
</dbReference>
<dbReference type="Gene3D" id="2.40.30.10">
    <property type="entry name" value="Translation factors"/>
    <property type="match status" value="1"/>
</dbReference>
<dbReference type="HAMAP" id="MF_01325_B">
    <property type="entry name" value="Ribosomal_uL3_B"/>
    <property type="match status" value="1"/>
</dbReference>
<dbReference type="InterPro" id="IPR000597">
    <property type="entry name" value="Ribosomal_uL3"/>
</dbReference>
<dbReference type="InterPro" id="IPR019927">
    <property type="entry name" value="Ribosomal_uL3_bac/org-type"/>
</dbReference>
<dbReference type="InterPro" id="IPR019926">
    <property type="entry name" value="Ribosomal_uL3_CS"/>
</dbReference>
<dbReference type="InterPro" id="IPR009000">
    <property type="entry name" value="Transl_B-barrel_sf"/>
</dbReference>
<dbReference type="NCBIfam" id="TIGR03625">
    <property type="entry name" value="L3_bact"/>
    <property type="match status" value="1"/>
</dbReference>
<dbReference type="PANTHER" id="PTHR11229">
    <property type="entry name" value="50S RIBOSOMAL PROTEIN L3"/>
    <property type="match status" value="1"/>
</dbReference>
<dbReference type="PANTHER" id="PTHR11229:SF16">
    <property type="entry name" value="LARGE RIBOSOMAL SUBUNIT PROTEIN UL3C"/>
    <property type="match status" value="1"/>
</dbReference>
<dbReference type="Pfam" id="PF00297">
    <property type="entry name" value="Ribosomal_L3"/>
    <property type="match status" value="1"/>
</dbReference>
<dbReference type="SUPFAM" id="SSF50447">
    <property type="entry name" value="Translation proteins"/>
    <property type="match status" value="1"/>
</dbReference>
<dbReference type="PROSITE" id="PS00474">
    <property type="entry name" value="RIBOSOMAL_L3"/>
    <property type="match status" value="1"/>
</dbReference>
<reference key="1">
    <citation type="submission" date="2007-08" db="EMBL/GenBank/DDBJ databases">
        <authorList>
            <consortium name="The Vibrio harveyi Genome Sequencing Project"/>
            <person name="Bassler B."/>
            <person name="Clifton S.W."/>
            <person name="Fulton L."/>
            <person name="Delehaunty K."/>
            <person name="Fronick C."/>
            <person name="Harrison M."/>
            <person name="Markivic C."/>
            <person name="Fulton R."/>
            <person name="Tin-Wollam A.-M."/>
            <person name="Shah N."/>
            <person name="Pepin K."/>
            <person name="Nash W."/>
            <person name="Thiruvilangam P."/>
            <person name="Bhonagiri V."/>
            <person name="Waters C."/>
            <person name="Tu K.C."/>
            <person name="Irgon J."/>
            <person name="Wilson R.K."/>
        </authorList>
    </citation>
    <scope>NUCLEOTIDE SEQUENCE [LARGE SCALE GENOMIC DNA]</scope>
    <source>
        <strain>ATCC BAA-1116 / BB120</strain>
    </source>
</reference>
<accession>A7MWI3</accession>
<protein>
    <recommendedName>
        <fullName evidence="1">Large ribosomal subunit protein uL3</fullName>
    </recommendedName>
    <alternativeName>
        <fullName evidence="2">50S ribosomal protein L3</fullName>
    </alternativeName>
</protein>
<evidence type="ECO:0000255" key="1">
    <source>
        <dbReference type="HAMAP-Rule" id="MF_01325"/>
    </source>
</evidence>
<evidence type="ECO:0000305" key="2"/>
<gene>
    <name evidence="1" type="primary">rplC</name>
    <name type="ordered locus">VIBHAR_00730</name>
</gene>
<comment type="function">
    <text evidence="1">One of the primary rRNA binding proteins, it binds directly near the 3'-end of the 23S rRNA, where it nucleates assembly of the 50S subunit.</text>
</comment>
<comment type="subunit">
    <text evidence="1">Part of the 50S ribosomal subunit. Forms a cluster with proteins L14 and L19.</text>
</comment>
<comment type="PTM">
    <text evidence="1">Methylated by PrmB.</text>
</comment>
<comment type="similarity">
    <text evidence="1">Belongs to the universal ribosomal protein uL3 family.</text>
</comment>